<sequence length="495" mass="53315">MADRNLRDLLAPWVPDAPSRALREMTLDSRVAAAGDLFVAVVGHQADGRRYIPQAIAQGVAAIIAEAKDEATDGEIREMHGVPVIYLSQLNERLSALAGRFYHEPSDNLRLVGVTGTNGKTTTTQLLAQWSQLLGETSAVMGTVGNGLLGKVIPTENTTGSAVDVQHELAGLVDQGATFCAMEVSSHGLVQHRVAALKFPASVFTNLSRDHLDYHGDMEHYEAAKWLLYSEHHCGQAIINADDEVGRRWLAKLPDAVAVSMEDHINPNCHGRWLKATEVNYHDSGATIRFSSSWGDGEIESHLMGAFNVSNLLLALATLLALGYPLADLLKTAARLQPVCGRMEVFTAPGKPTVVVDYAHTPDALEKALQAARLHCAGKLWCVFGCGGDRDKGKRPLMGAIAEEFADVAVVTDDNPRTEEPRAIINDILAGMLDAGHAKVMEGRAEAVTCAVMQAKENDVVLVAGKGHEDYQIVGNQRLDYSDRVTVARLLGGIA</sequence>
<feature type="chain" id="PRO_0000101939" description="UDP-N-acetylmuramoyl-L-alanyl-D-glutamate--2,6-diaminopimelate ligase">
    <location>
        <begin position="1"/>
        <end position="495"/>
    </location>
</feature>
<feature type="short sequence motif" description="Meso-diaminopimelate recognition motif">
    <location>
        <begin position="414"/>
        <end position="417"/>
    </location>
</feature>
<feature type="binding site" evidence="1">
    <location>
        <position position="27"/>
    </location>
    <ligand>
        <name>UDP-N-acetyl-alpha-D-muramoyl-L-alanyl-D-glutamate</name>
        <dbReference type="ChEBI" id="CHEBI:83900"/>
    </ligand>
</feature>
<feature type="binding site" evidence="1">
    <location>
        <position position="29"/>
    </location>
    <ligand>
        <name>UDP-N-acetyl-alpha-D-muramoyl-L-alanyl-D-glutamate</name>
        <dbReference type="ChEBI" id="CHEBI:83900"/>
    </ligand>
</feature>
<feature type="binding site" evidence="1">
    <location>
        <begin position="44"/>
        <end position="46"/>
    </location>
    <ligand>
        <name>UDP-N-acetyl-alpha-D-muramoyl-L-alanyl-D-glutamate</name>
        <dbReference type="ChEBI" id="CHEBI:83900"/>
    </ligand>
</feature>
<feature type="binding site" evidence="1">
    <location>
        <begin position="116"/>
        <end position="122"/>
    </location>
    <ligand>
        <name>ATP</name>
        <dbReference type="ChEBI" id="CHEBI:30616"/>
    </ligand>
</feature>
<feature type="binding site" evidence="1">
    <location>
        <position position="157"/>
    </location>
    <ligand>
        <name>UDP-N-acetyl-alpha-D-muramoyl-L-alanyl-D-glutamate</name>
        <dbReference type="ChEBI" id="CHEBI:83900"/>
    </ligand>
</feature>
<feature type="binding site" evidence="1">
    <location>
        <begin position="158"/>
        <end position="159"/>
    </location>
    <ligand>
        <name>UDP-N-acetyl-alpha-D-muramoyl-L-alanyl-D-glutamate</name>
        <dbReference type="ChEBI" id="CHEBI:83900"/>
    </ligand>
</feature>
<feature type="binding site" evidence="1">
    <location>
        <position position="185"/>
    </location>
    <ligand>
        <name>UDP-N-acetyl-alpha-D-muramoyl-L-alanyl-D-glutamate</name>
        <dbReference type="ChEBI" id="CHEBI:83900"/>
    </ligand>
</feature>
<feature type="binding site" evidence="1">
    <location>
        <position position="191"/>
    </location>
    <ligand>
        <name>UDP-N-acetyl-alpha-D-muramoyl-L-alanyl-D-glutamate</name>
        <dbReference type="ChEBI" id="CHEBI:83900"/>
    </ligand>
</feature>
<feature type="binding site" evidence="1">
    <location>
        <position position="193"/>
    </location>
    <ligand>
        <name>UDP-N-acetyl-alpha-D-muramoyl-L-alanyl-D-glutamate</name>
        <dbReference type="ChEBI" id="CHEBI:83900"/>
    </ligand>
</feature>
<feature type="binding site" evidence="1">
    <location>
        <position position="390"/>
    </location>
    <ligand>
        <name>meso-2,6-diaminopimelate</name>
        <dbReference type="ChEBI" id="CHEBI:57791"/>
    </ligand>
</feature>
<feature type="binding site" evidence="1">
    <location>
        <begin position="414"/>
        <end position="417"/>
    </location>
    <ligand>
        <name>meso-2,6-diaminopimelate</name>
        <dbReference type="ChEBI" id="CHEBI:57791"/>
    </ligand>
</feature>
<feature type="binding site" evidence="1">
    <location>
        <position position="465"/>
    </location>
    <ligand>
        <name>meso-2,6-diaminopimelate</name>
        <dbReference type="ChEBI" id="CHEBI:57791"/>
    </ligand>
</feature>
<feature type="binding site" evidence="1">
    <location>
        <position position="469"/>
    </location>
    <ligand>
        <name>meso-2,6-diaminopimelate</name>
        <dbReference type="ChEBI" id="CHEBI:57791"/>
    </ligand>
</feature>
<feature type="modified residue" description="N6-carboxylysine" evidence="1">
    <location>
        <position position="225"/>
    </location>
</feature>
<accession>Q83MG0</accession>
<reference key="1">
    <citation type="journal article" date="2002" name="Nucleic Acids Res.">
        <title>Genome sequence of Shigella flexneri 2a: insights into pathogenicity through comparison with genomes of Escherichia coli K12 and O157.</title>
        <authorList>
            <person name="Jin Q."/>
            <person name="Yuan Z."/>
            <person name="Xu J."/>
            <person name="Wang Y."/>
            <person name="Shen Y."/>
            <person name="Lu W."/>
            <person name="Wang J."/>
            <person name="Liu H."/>
            <person name="Yang J."/>
            <person name="Yang F."/>
            <person name="Zhang X."/>
            <person name="Zhang J."/>
            <person name="Yang G."/>
            <person name="Wu H."/>
            <person name="Qu D."/>
            <person name="Dong J."/>
            <person name="Sun L."/>
            <person name="Xue Y."/>
            <person name="Zhao A."/>
            <person name="Gao Y."/>
            <person name="Zhu J."/>
            <person name="Kan B."/>
            <person name="Ding K."/>
            <person name="Chen S."/>
            <person name="Cheng H."/>
            <person name="Yao Z."/>
            <person name="He B."/>
            <person name="Chen R."/>
            <person name="Ma D."/>
            <person name="Qiang B."/>
            <person name="Wen Y."/>
            <person name="Hou Y."/>
            <person name="Yu J."/>
        </authorList>
    </citation>
    <scope>NUCLEOTIDE SEQUENCE [LARGE SCALE GENOMIC DNA]</scope>
    <source>
        <strain>301 / Serotype 2a</strain>
    </source>
</reference>
<reference key="2">
    <citation type="journal article" date="2003" name="Infect. Immun.">
        <title>Complete genome sequence and comparative genomics of Shigella flexneri serotype 2a strain 2457T.</title>
        <authorList>
            <person name="Wei J."/>
            <person name="Goldberg M.B."/>
            <person name="Burland V."/>
            <person name="Venkatesan M.M."/>
            <person name="Deng W."/>
            <person name="Fournier G."/>
            <person name="Mayhew G.F."/>
            <person name="Plunkett G. III"/>
            <person name="Rose D.J."/>
            <person name="Darling A."/>
            <person name="Mau B."/>
            <person name="Perna N.T."/>
            <person name="Payne S.M."/>
            <person name="Runyen-Janecky L.J."/>
            <person name="Zhou S."/>
            <person name="Schwartz D.C."/>
            <person name="Blattner F.R."/>
        </authorList>
    </citation>
    <scope>NUCLEOTIDE SEQUENCE [LARGE SCALE GENOMIC DNA]</scope>
    <source>
        <strain>ATCC 700930 / 2457T / Serotype 2a</strain>
    </source>
</reference>
<evidence type="ECO:0000255" key="1">
    <source>
        <dbReference type="HAMAP-Rule" id="MF_00208"/>
    </source>
</evidence>
<keyword id="KW-0067">ATP-binding</keyword>
<keyword id="KW-0131">Cell cycle</keyword>
<keyword id="KW-0132">Cell division</keyword>
<keyword id="KW-0133">Cell shape</keyword>
<keyword id="KW-0961">Cell wall biogenesis/degradation</keyword>
<keyword id="KW-0963">Cytoplasm</keyword>
<keyword id="KW-0436">Ligase</keyword>
<keyword id="KW-0460">Magnesium</keyword>
<keyword id="KW-0547">Nucleotide-binding</keyword>
<keyword id="KW-0573">Peptidoglycan synthesis</keyword>
<keyword id="KW-1185">Reference proteome</keyword>
<name>MURE_SHIFL</name>
<organism>
    <name type="scientific">Shigella flexneri</name>
    <dbReference type="NCBI Taxonomy" id="623"/>
    <lineage>
        <taxon>Bacteria</taxon>
        <taxon>Pseudomonadati</taxon>
        <taxon>Pseudomonadota</taxon>
        <taxon>Gammaproteobacteria</taxon>
        <taxon>Enterobacterales</taxon>
        <taxon>Enterobacteriaceae</taxon>
        <taxon>Shigella</taxon>
    </lineage>
</organism>
<comment type="function">
    <text evidence="1">Catalyzes the addition of meso-diaminopimelic acid to the nucleotide precursor UDP-N-acetylmuramoyl-L-alanyl-D-glutamate (UMAG) in the biosynthesis of bacterial cell-wall peptidoglycan.</text>
</comment>
<comment type="catalytic activity">
    <reaction evidence="1">
        <text>UDP-N-acetyl-alpha-D-muramoyl-L-alanyl-D-glutamate + meso-2,6-diaminopimelate + ATP = UDP-N-acetyl-alpha-D-muramoyl-L-alanyl-gamma-D-glutamyl-meso-2,6-diaminopimelate + ADP + phosphate + H(+)</text>
        <dbReference type="Rhea" id="RHEA:23676"/>
        <dbReference type="ChEBI" id="CHEBI:15378"/>
        <dbReference type="ChEBI" id="CHEBI:30616"/>
        <dbReference type="ChEBI" id="CHEBI:43474"/>
        <dbReference type="ChEBI" id="CHEBI:57791"/>
        <dbReference type="ChEBI" id="CHEBI:83900"/>
        <dbReference type="ChEBI" id="CHEBI:83905"/>
        <dbReference type="ChEBI" id="CHEBI:456216"/>
        <dbReference type="EC" id="6.3.2.13"/>
    </reaction>
</comment>
<comment type="cofactor">
    <cofactor evidence="1">
        <name>Mg(2+)</name>
        <dbReference type="ChEBI" id="CHEBI:18420"/>
    </cofactor>
</comment>
<comment type="pathway">
    <text evidence="1">Cell wall biogenesis; peptidoglycan biosynthesis.</text>
</comment>
<comment type="subcellular location">
    <subcellularLocation>
        <location evidence="1">Cytoplasm</location>
    </subcellularLocation>
</comment>
<comment type="PTM">
    <text evidence="1">Carboxylation is probably crucial for Mg(2+) binding and, consequently, for the gamma-phosphate positioning of ATP.</text>
</comment>
<comment type="similarity">
    <text evidence="1">Belongs to the MurCDEF family. MurE subfamily.</text>
</comment>
<protein>
    <recommendedName>
        <fullName evidence="1">UDP-N-acetylmuramoyl-L-alanyl-D-glutamate--2,6-diaminopimelate ligase</fullName>
        <ecNumber evidence="1">6.3.2.13</ecNumber>
    </recommendedName>
    <alternativeName>
        <fullName evidence="1">Meso-A2pm-adding enzyme</fullName>
    </alternativeName>
    <alternativeName>
        <fullName evidence="1">Meso-diaminopimelate-adding enzyme</fullName>
    </alternativeName>
    <alternativeName>
        <fullName evidence="1">UDP-MurNAc-L-Ala-D-Glu:meso-diaminopimelate ligase</fullName>
    </alternativeName>
    <alternativeName>
        <fullName evidence="1">UDP-MurNAc-tripeptide synthetase</fullName>
    </alternativeName>
    <alternativeName>
        <fullName evidence="1">UDP-N-acetylmuramyl-tripeptide synthetase</fullName>
    </alternativeName>
</protein>
<dbReference type="EC" id="6.3.2.13" evidence="1"/>
<dbReference type="EMBL" id="AE005674">
    <property type="protein sequence ID" value="AAN41747.1"/>
    <property type="molecule type" value="Genomic_DNA"/>
</dbReference>
<dbReference type="EMBL" id="AE014073">
    <property type="protein sequence ID" value="AAP15628.1"/>
    <property type="molecule type" value="Genomic_DNA"/>
</dbReference>
<dbReference type="RefSeq" id="NP_706040.1">
    <property type="nucleotide sequence ID" value="NC_004337.2"/>
</dbReference>
<dbReference type="RefSeq" id="WP_000785134.1">
    <property type="nucleotide sequence ID" value="NZ_WPGW01000007.1"/>
</dbReference>
<dbReference type="SMR" id="Q83MG0"/>
<dbReference type="STRING" id="198214.SF0082"/>
<dbReference type="PaxDb" id="198214-SF0082"/>
<dbReference type="GeneID" id="1024503"/>
<dbReference type="KEGG" id="sfl:SF0082"/>
<dbReference type="KEGG" id="sfx:S0084"/>
<dbReference type="PATRIC" id="fig|198214.7.peg.97"/>
<dbReference type="HOGENOM" id="CLU_022291_3_2_6"/>
<dbReference type="UniPathway" id="UPA00219"/>
<dbReference type="Proteomes" id="UP000001006">
    <property type="component" value="Chromosome"/>
</dbReference>
<dbReference type="Proteomes" id="UP000002673">
    <property type="component" value="Chromosome"/>
</dbReference>
<dbReference type="GO" id="GO:0005737">
    <property type="term" value="C:cytoplasm"/>
    <property type="evidence" value="ECO:0007669"/>
    <property type="project" value="UniProtKB-SubCell"/>
</dbReference>
<dbReference type="GO" id="GO:0005524">
    <property type="term" value="F:ATP binding"/>
    <property type="evidence" value="ECO:0007669"/>
    <property type="project" value="UniProtKB-UniRule"/>
</dbReference>
<dbReference type="GO" id="GO:0000287">
    <property type="term" value="F:magnesium ion binding"/>
    <property type="evidence" value="ECO:0007669"/>
    <property type="project" value="UniProtKB-UniRule"/>
</dbReference>
<dbReference type="GO" id="GO:0008765">
    <property type="term" value="F:UDP-N-acetylmuramoylalanyl-D-glutamate-2,6-diaminopimelate ligase activity"/>
    <property type="evidence" value="ECO:0007669"/>
    <property type="project" value="UniProtKB-UniRule"/>
</dbReference>
<dbReference type="GO" id="GO:0051301">
    <property type="term" value="P:cell division"/>
    <property type="evidence" value="ECO:0007669"/>
    <property type="project" value="UniProtKB-KW"/>
</dbReference>
<dbReference type="GO" id="GO:0071555">
    <property type="term" value="P:cell wall organization"/>
    <property type="evidence" value="ECO:0007669"/>
    <property type="project" value="UniProtKB-KW"/>
</dbReference>
<dbReference type="GO" id="GO:0009252">
    <property type="term" value="P:peptidoglycan biosynthetic process"/>
    <property type="evidence" value="ECO:0007669"/>
    <property type="project" value="UniProtKB-UniRule"/>
</dbReference>
<dbReference type="GO" id="GO:0008360">
    <property type="term" value="P:regulation of cell shape"/>
    <property type="evidence" value="ECO:0007669"/>
    <property type="project" value="UniProtKB-KW"/>
</dbReference>
<dbReference type="FunFam" id="3.40.1190.10:FF:000006">
    <property type="entry name" value="UDP-N-acetylmuramoyl-L-alanyl-D-glutamate--2,6-diaminopimelate ligase"/>
    <property type="match status" value="1"/>
</dbReference>
<dbReference type="FunFam" id="3.40.1390.10:FF:000002">
    <property type="entry name" value="UDP-N-acetylmuramoyl-L-alanyl-D-glutamate--2,6-diaminopimelate ligase"/>
    <property type="match status" value="1"/>
</dbReference>
<dbReference type="FunFam" id="3.90.190.20:FF:000006">
    <property type="entry name" value="UDP-N-acetylmuramoyl-L-alanyl-D-glutamate--2,6-diaminopimelate ligase"/>
    <property type="match status" value="1"/>
</dbReference>
<dbReference type="Gene3D" id="3.90.190.20">
    <property type="entry name" value="Mur ligase, C-terminal domain"/>
    <property type="match status" value="1"/>
</dbReference>
<dbReference type="Gene3D" id="3.40.1190.10">
    <property type="entry name" value="Mur-like, catalytic domain"/>
    <property type="match status" value="1"/>
</dbReference>
<dbReference type="Gene3D" id="3.40.1390.10">
    <property type="entry name" value="MurE/MurF, N-terminal domain"/>
    <property type="match status" value="1"/>
</dbReference>
<dbReference type="HAMAP" id="MF_00208">
    <property type="entry name" value="MurE"/>
    <property type="match status" value="1"/>
</dbReference>
<dbReference type="InterPro" id="IPR036565">
    <property type="entry name" value="Mur-like_cat_sf"/>
</dbReference>
<dbReference type="InterPro" id="IPR004101">
    <property type="entry name" value="Mur_ligase_C"/>
</dbReference>
<dbReference type="InterPro" id="IPR036615">
    <property type="entry name" value="Mur_ligase_C_dom_sf"/>
</dbReference>
<dbReference type="InterPro" id="IPR013221">
    <property type="entry name" value="Mur_ligase_cen"/>
</dbReference>
<dbReference type="InterPro" id="IPR000713">
    <property type="entry name" value="Mur_ligase_N"/>
</dbReference>
<dbReference type="InterPro" id="IPR035911">
    <property type="entry name" value="MurE/MurF_N"/>
</dbReference>
<dbReference type="InterPro" id="IPR005761">
    <property type="entry name" value="UDP-N-AcMur-Glu-dNH2Pim_ligase"/>
</dbReference>
<dbReference type="NCBIfam" id="TIGR01085">
    <property type="entry name" value="murE"/>
    <property type="match status" value="1"/>
</dbReference>
<dbReference type="NCBIfam" id="NF001123">
    <property type="entry name" value="PRK00139.1-1"/>
    <property type="match status" value="1"/>
</dbReference>
<dbReference type="NCBIfam" id="NF001124">
    <property type="entry name" value="PRK00139.1-2"/>
    <property type="match status" value="1"/>
</dbReference>
<dbReference type="NCBIfam" id="NF001126">
    <property type="entry name" value="PRK00139.1-4"/>
    <property type="match status" value="1"/>
</dbReference>
<dbReference type="PANTHER" id="PTHR23135">
    <property type="entry name" value="MUR LIGASE FAMILY MEMBER"/>
    <property type="match status" value="1"/>
</dbReference>
<dbReference type="PANTHER" id="PTHR23135:SF4">
    <property type="entry name" value="UDP-N-ACETYLMURAMOYL-L-ALANYL-D-GLUTAMATE--2,6-DIAMINOPIMELATE LIGASE MURE HOMOLOG, CHLOROPLASTIC"/>
    <property type="match status" value="1"/>
</dbReference>
<dbReference type="Pfam" id="PF01225">
    <property type="entry name" value="Mur_ligase"/>
    <property type="match status" value="1"/>
</dbReference>
<dbReference type="Pfam" id="PF02875">
    <property type="entry name" value="Mur_ligase_C"/>
    <property type="match status" value="1"/>
</dbReference>
<dbReference type="Pfam" id="PF08245">
    <property type="entry name" value="Mur_ligase_M"/>
    <property type="match status" value="1"/>
</dbReference>
<dbReference type="SUPFAM" id="SSF53623">
    <property type="entry name" value="MurD-like peptide ligases, catalytic domain"/>
    <property type="match status" value="1"/>
</dbReference>
<dbReference type="SUPFAM" id="SSF53244">
    <property type="entry name" value="MurD-like peptide ligases, peptide-binding domain"/>
    <property type="match status" value="1"/>
</dbReference>
<dbReference type="SUPFAM" id="SSF63418">
    <property type="entry name" value="MurE/MurF N-terminal domain"/>
    <property type="match status" value="1"/>
</dbReference>
<proteinExistence type="inferred from homology"/>
<gene>
    <name evidence="1" type="primary">murE</name>
    <name type="ordered locus">SF0082</name>
    <name type="ordered locus">S0084</name>
</gene>